<feature type="initiator methionine" description="Removed" evidence="1">
    <location>
        <position position="1"/>
    </location>
</feature>
<feature type="chain" id="PRO_0000310555" description="THO complex subunit 5 homolog">
    <location>
        <begin position="2"/>
        <end position="683"/>
    </location>
</feature>
<feature type="region of interest" description="Disordered" evidence="2">
    <location>
        <begin position="1"/>
        <end position="42"/>
    </location>
</feature>
<feature type="region of interest" description="Interaction with THOC7" evidence="1">
    <location>
        <begin position="2"/>
        <end position="199"/>
    </location>
</feature>
<feature type="region of interest" description="Interaction with CSF1R" evidence="3">
    <location>
        <begin position="2"/>
        <end position="144"/>
    </location>
</feature>
<feature type="region of interest" description="Tandem RWD domains" evidence="1">
    <location>
        <begin position="247"/>
        <end position="683"/>
    </location>
</feature>
<feature type="region of interest" description="Disordered" evidence="2">
    <location>
        <begin position="301"/>
        <end position="336"/>
    </location>
</feature>
<feature type="coiled-coil region" evidence="1">
    <location>
        <begin position="81"/>
        <end position="247"/>
    </location>
</feature>
<feature type="short sequence motif" description="Nuclear localization signal">
    <location>
        <begin position="7"/>
        <end position="10"/>
    </location>
</feature>
<feature type="compositionally biased region" description="Basic and acidic residues" evidence="2">
    <location>
        <begin position="22"/>
        <end position="42"/>
    </location>
</feature>
<feature type="compositionally biased region" description="Acidic residues" evidence="2">
    <location>
        <begin position="306"/>
        <end position="319"/>
    </location>
</feature>
<feature type="modified residue" description="N-acetylserine" evidence="1">
    <location>
        <position position="2"/>
    </location>
</feature>
<feature type="modified residue" description="Phosphoserine" evidence="11">
    <location>
        <position position="5"/>
    </location>
</feature>
<feature type="modified residue" description="Phosphoserine" evidence="11">
    <location>
        <position position="6"/>
    </location>
</feature>
<feature type="modified residue" description="Phosphotyrosine" evidence="7">
    <location>
        <position position="225"/>
    </location>
</feature>
<feature type="modified residue" description="Phosphoserine" evidence="12 13">
    <location>
        <position position="307"/>
    </location>
</feature>
<feature type="modified residue" description="Phosphoserine" evidence="12 13">
    <location>
        <position position="312"/>
    </location>
</feature>
<feature type="modified residue" description="Phosphoserine" evidence="12 13">
    <location>
        <position position="314"/>
    </location>
</feature>
<feature type="modified residue" description="Phosphothreonine" evidence="5 13">
    <location>
        <position position="328"/>
    </location>
</feature>
<feature type="cross-link" description="Glycyl lysine isopeptide (Lys-Gly) (interchain with G-Cter in SUMO2)" evidence="1">
    <location>
        <position position="153"/>
    </location>
</feature>
<feature type="mutagenesis site" description="Enhances nuclear localization." evidence="4">
    <original>SS</original>
    <variation>AA</variation>
    <location>
        <begin position="5"/>
        <end position="6"/>
    </location>
</feature>
<feature type="mutagenesis site" description="Abolishes nuclear localization." evidence="4">
    <original>SS</original>
    <variation>EE</variation>
    <location>
        <begin position="5"/>
        <end position="6"/>
    </location>
</feature>
<feature type="mutagenesis site" description="Abolishes nuclear localization." evidence="4">
    <original>KR</original>
    <variation>TG</variation>
    <location>
        <begin position="8"/>
        <end position="9"/>
    </location>
</feature>
<feature type="sequence conflict" description="In Ref. 2; BAC34398." evidence="10" ref="2">
    <original>V</original>
    <variation>L</variation>
    <location>
        <position position="80"/>
    </location>
</feature>
<feature type="sequence conflict" description="In Ref. 3; AAH39758." evidence="10" ref="3">
    <original>T</original>
    <variation>A</variation>
    <location>
        <position position="526"/>
    </location>
</feature>
<dbReference type="EMBL" id="AK050734">
    <property type="protein sequence ID" value="BAC34398.1"/>
    <property type="molecule type" value="mRNA"/>
</dbReference>
<dbReference type="EMBL" id="BC039758">
    <property type="protein sequence ID" value="AAH39758.1"/>
    <property type="molecule type" value="mRNA"/>
</dbReference>
<dbReference type="EMBL" id="AK173078">
    <property type="protein sequence ID" value="BAD32356.1"/>
    <property type="molecule type" value="mRNA"/>
</dbReference>
<dbReference type="CCDS" id="CCDS24393.1"/>
<dbReference type="RefSeq" id="NP_766026.1">
    <property type="nucleotide sequence ID" value="NM_172438.3"/>
</dbReference>
<dbReference type="SMR" id="Q8BKT7"/>
<dbReference type="BioGRID" id="223611">
    <property type="interactions" value="5"/>
</dbReference>
<dbReference type="FunCoup" id="Q8BKT7">
    <property type="interactions" value="3179"/>
</dbReference>
<dbReference type="IntAct" id="Q8BKT7">
    <property type="interactions" value="2"/>
</dbReference>
<dbReference type="STRING" id="10090.ENSMUSP00000045580"/>
<dbReference type="iPTMnet" id="Q8BKT7"/>
<dbReference type="PhosphoSitePlus" id="Q8BKT7"/>
<dbReference type="jPOST" id="Q8BKT7"/>
<dbReference type="PaxDb" id="10090-ENSMUSP00000045580"/>
<dbReference type="PeptideAtlas" id="Q8BKT7"/>
<dbReference type="ProteomicsDB" id="259020"/>
<dbReference type="Pumba" id="Q8BKT7"/>
<dbReference type="DNASU" id="107829"/>
<dbReference type="GeneID" id="107829"/>
<dbReference type="KEGG" id="mmu:107829"/>
<dbReference type="UCSC" id="uc007hvl.1">
    <property type="organism name" value="mouse"/>
</dbReference>
<dbReference type="AGR" id="MGI:1351333"/>
<dbReference type="CTD" id="8563"/>
<dbReference type="MGI" id="MGI:1351333">
    <property type="gene designation" value="Thoc5"/>
</dbReference>
<dbReference type="eggNOG" id="KOG2216">
    <property type="taxonomic scope" value="Eukaryota"/>
</dbReference>
<dbReference type="InParanoid" id="Q8BKT7"/>
<dbReference type="OrthoDB" id="20582at2759"/>
<dbReference type="PhylomeDB" id="Q8BKT7"/>
<dbReference type="TreeFam" id="TF314812"/>
<dbReference type="Reactome" id="R-MMU-159236">
    <property type="pathway name" value="Transport of Mature mRNA derived from an Intron-Containing Transcript"/>
</dbReference>
<dbReference type="Reactome" id="R-MMU-72187">
    <property type="pathway name" value="mRNA 3'-end processing"/>
</dbReference>
<dbReference type="Reactome" id="R-MMU-73856">
    <property type="pathway name" value="RNA Polymerase II Transcription Termination"/>
</dbReference>
<dbReference type="BioGRID-ORCS" id="107829">
    <property type="hits" value="23 hits in 80 CRISPR screens"/>
</dbReference>
<dbReference type="ChiTaRS" id="Thoc5">
    <property type="organism name" value="mouse"/>
</dbReference>
<dbReference type="PRO" id="PR:Q8BKT7"/>
<dbReference type="Proteomes" id="UP000000589">
    <property type="component" value="Unplaced"/>
</dbReference>
<dbReference type="RNAct" id="Q8BKT7">
    <property type="molecule type" value="protein"/>
</dbReference>
<dbReference type="GO" id="GO:0005829">
    <property type="term" value="C:cytosol"/>
    <property type="evidence" value="ECO:0000304"/>
    <property type="project" value="Reactome"/>
</dbReference>
<dbReference type="GO" id="GO:0005634">
    <property type="term" value="C:nucleus"/>
    <property type="evidence" value="ECO:0000314"/>
    <property type="project" value="MGI"/>
</dbReference>
<dbReference type="GO" id="GO:0003729">
    <property type="term" value="F:mRNA binding"/>
    <property type="evidence" value="ECO:0000315"/>
    <property type="project" value="MGI"/>
</dbReference>
<dbReference type="GO" id="GO:0001824">
    <property type="term" value="P:blastocyst development"/>
    <property type="evidence" value="ECO:0000315"/>
    <property type="project" value="MGI"/>
</dbReference>
<dbReference type="GO" id="GO:0000902">
    <property type="term" value="P:cell morphogenesis"/>
    <property type="evidence" value="ECO:0000315"/>
    <property type="project" value="MGI"/>
</dbReference>
<dbReference type="GO" id="GO:0030224">
    <property type="term" value="P:monocyte differentiation"/>
    <property type="evidence" value="ECO:0000250"/>
    <property type="project" value="UniProtKB"/>
</dbReference>
<dbReference type="GO" id="GO:0006406">
    <property type="term" value="P:mRNA export from nucleus"/>
    <property type="evidence" value="ECO:0000250"/>
    <property type="project" value="UniProtKB"/>
</dbReference>
<dbReference type="GO" id="GO:0006397">
    <property type="term" value="P:mRNA processing"/>
    <property type="evidence" value="ECO:0007669"/>
    <property type="project" value="UniProtKB-KW"/>
</dbReference>
<dbReference type="GO" id="GO:0045650">
    <property type="term" value="P:negative regulation of macrophage differentiation"/>
    <property type="evidence" value="ECO:0000314"/>
    <property type="project" value="MGI"/>
</dbReference>
<dbReference type="GO" id="GO:0060215">
    <property type="term" value="P:primitive hemopoiesis"/>
    <property type="evidence" value="ECO:0000315"/>
    <property type="project" value="UniProtKB"/>
</dbReference>
<dbReference type="GO" id="GO:0010468">
    <property type="term" value="P:regulation of gene expression"/>
    <property type="evidence" value="ECO:0000315"/>
    <property type="project" value="MGI"/>
</dbReference>
<dbReference type="GO" id="GO:0010793">
    <property type="term" value="P:regulation of mRNA export from nucleus"/>
    <property type="evidence" value="ECO:0000315"/>
    <property type="project" value="MGI"/>
</dbReference>
<dbReference type="GO" id="GO:2000035">
    <property type="term" value="P:regulation of stem cell division"/>
    <property type="evidence" value="ECO:0000315"/>
    <property type="project" value="MGI"/>
</dbReference>
<dbReference type="GO" id="GO:0008380">
    <property type="term" value="P:RNA splicing"/>
    <property type="evidence" value="ECO:0007669"/>
    <property type="project" value="UniProtKB-KW"/>
</dbReference>
<dbReference type="GO" id="GO:0017145">
    <property type="term" value="P:stem cell division"/>
    <property type="evidence" value="ECO:0000315"/>
    <property type="project" value="MGI"/>
</dbReference>
<dbReference type="InterPro" id="IPR019163">
    <property type="entry name" value="THO_Thoc5"/>
</dbReference>
<dbReference type="PANTHER" id="PTHR13375">
    <property type="entry name" value="FMS INTERACTING PROTEIN"/>
    <property type="match status" value="1"/>
</dbReference>
<dbReference type="PANTHER" id="PTHR13375:SF3">
    <property type="entry name" value="THO COMPLEX SUBUNIT 5 HOMOLOG"/>
    <property type="match status" value="1"/>
</dbReference>
<dbReference type="Pfam" id="PF09766">
    <property type="entry name" value="FmiP_Thoc5"/>
    <property type="match status" value="1"/>
</dbReference>
<proteinExistence type="evidence at protein level"/>
<protein>
    <recommendedName>
        <fullName>THO complex subunit 5 homolog</fullName>
    </recommendedName>
    <alternativeName>
        <fullName>Fms-interacting protein</fullName>
        <shortName evidence="9">FMIP</shortName>
    </alternativeName>
</protein>
<reference key="1">
    <citation type="journal article" date="1999" name="Oncogene">
        <title>FMIP, a novel Fms-interacting protein, affects granulocyte/macrophage differentiation.</title>
        <authorList>
            <person name="Tamura T."/>
            <person name="Mancini A."/>
            <person name="Joos H."/>
            <person name="Koch A."/>
            <person name="Hakim C."/>
            <person name="Dumanski J."/>
            <person name="Weidner K.M."/>
            <person name="Niemann H."/>
        </authorList>
    </citation>
    <scope>NUCLEOTIDE SEQUENCE [MRNA]</scope>
    <scope>INTERACTION WITH CSF1R</scope>
    <scope>TISSUE SPECIFICITY</scope>
    <scope>PHOSPHORYLATION</scope>
</reference>
<reference key="2">
    <citation type="journal article" date="2005" name="Science">
        <title>The transcriptional landscape of the mammalian genome.</title>
        <authorList>
            <person name="Carninci P."/>
            <person name="Kasukawa T."/>
            <person name="Katayama S."/>
            <person name="Gough J."/>
            <person name="Frith M.C."/>
            <person name="Maeda N."/>
            <person name="Oyama R."/>
            <person name="Ravasi T."/>
            <person name="Lenhard B."/>
            <person name="Wells C."/>
            <person name="Kodzius R."/>
            <person name="Shimokawa K."/>
            <person name="Bajic V.B."/>
            <person name="Brenner S.E."/>
            <person name="Batalov S."/>
            <person name="Forrest A.R."/>
            <person name="Zavolan M."/>
            <person name="Davis M.J."/>
            <person name="Wilming L.G."/>
            <person name="Aidinis V."/>
            <person name="Allen J.E."/>
            <person name="Ambesi-Impiombato A."/>
            <person name="Apweiler R."/>
            <person name="Aturaliya R.N."/>
            <person name="Bailey T.L."/>
            <person name="Bansal M."/>
            <person name="Baxter L."/>
            <person name="Beisel K.W."/>
            <person name="Bersano T."/>
            <person name="Bono H."/>
            <person name="Chalk A.M."/>
            <person name="Chiu K.P."/>
            <person name="Choudhary V."/>
            <person name="Christoffels A."/>
            <person name="Clutterbuck D.R."/>
            <person name="Crowe M.L."/>
            <person name="Dalla E."/>
            <person name="Dalrymple B.P."/>
            <person name="de Bono B."/>
            <person name="Della Gatta G."/>
            <person name="di Bernardo D."/>
            <person name="Down T."/>
            <person name="Engstrom P."/>
            <person name="Fagiolini M."/>
            <person name="Faulkner G."/>
            <person name="Fletcher C.F."/>
            <person name="Fukushima T."/>
            <person name="Furuno M."/>
            <person name="Futaki S."/>
            <person name="Gariboldi M."/>
            <person name="Georgii-Hemming P."/>
            <person name="Gingeras T.R."/>
            <person name="Gojobori T."/>
            <person name="Green R.E."/>
            <person name="Gustincich S."/>
            <person name="Harbers M."/>
            <person name="Hayashi Y."/>
            <person name="Hensch T.K."/>
            <person name="Hirokawa N."/>
            <person name="Hill D."/>
            <person name="Huminiecki L."/>
            <person name="Iacono M."/>
            <person name="Ikeo K."/>
            <person name="Iwama A."/>
            <person name="Ishikawa T."/>
            <person name="Jakt M."/>
            <person name="Kanapin A."/>
            <person name="Katoh M."/>
            <person name="Kawasawa Y."/>
            <person name="Kelso J."/>
            <person name="Kitamura H."/>
            <person name="Kitano H."/>
            <person name="Kollias G."/>
            <person name="Krishnan S.P."/>
            <person name="Kruger A."/>
            <person name="Kummerfeld S.K."/>
            <person name="Kurochkin I.V."/>
            <person name="Lareau L.F."/>
            <person name="Lazarevic D."/>
            <person name="Lipovich L."/>
            <person name="Liu J."/>
            <person name="Liuni S."/>
            <person name="McWilliam S."/>
            <person name="Madan Babu M."/>
            <person name="Madera M."/>
            <person name="Marchionni L."/>
            <person name="Matsuda H."/>
            <person name="Matsuzawa S."/>
            <person name="Miki H."/>
            <person name="Mignone F."/>
            <person name="Miyake S."/>
            <person name="Morris K."/>
            <person name="Mottagui-Tabar S."/>
            <person name="Mulder N."/>
            <person name="Nakano N."/>
            <person name="Nakauchi H."/>
            <person name="Ng P."/>
            <person name="Nilsson R."/>
            <person name="Nishiguchi S."/>
            <person name="Nishikawa S."/>
            <person name="Nori F."/>
            <person name="Ohara O."/>
            <person name="Okazaki Y."/>
            <person name="Orlando V."/>
            <person name="Pang K.C."/>
            <person name="Pavan W.J."/>
            <person name="Pavesi G."/>
            <person name="Pesole G."/>
            <person name="Petrovsky N."/>
            <person name="Piazza S."/>
            <person name="Reed J."/>
            <person name="Reid J.F."/>
            <person name="Ring B.Z."/>
            <person name="Ringwald M."/>
            <person name="Rost B."/>
            <person name="Ruan Y."/>
            <person name="Salzberg S.L."/>
            <person name="Sandelin A."/>
            <person name="Schneider C."/>
            <person name="Schoenbach C."/>
            <person name="Sekiguchi K."/>
            <person name="Semple C.A."/>
            <person name="Seno S."/>
            <person name="Sessa L."/>
            <person name="Sheng Y."/>
            <person name="Shibata Y."/>
            <person name="Shimada H."/>
            <person name="Shimada K."/>
            <person name="Silva D."/>
            <person name="Sinclair B."/>
            <person name="Sperling S."/>
            <person name="Stupka E."/>
            <person name="Sugiura K."/>
            <person name="Sultana R."/>
            <person name="Takenaka Y."/>
            <person name="Taki K."/>
            <person name="Tammoja K."/>
            <person name="Tan S.L."/>
            <person name="Tang S."/>
            <person name="Taylor M.S."/>
            <person name="Tegner J."/>
            <person name="Teichmann S.A."/>
            <person name="Ueda H.R."/>
            <person name="van Nimwegen E."/>
            <person name="Verardo R."/>
            <person name="Wei C.L."/>
            <person name="Yagi K."/>
            <person name="Yamanishi H."/>
            <person name="Zabarovsky E."/>
            <person name="Zhu S."/>
            <person name="Zimmer A."/>
            <person name="Hide W."/>
            <person name="Bult C."/>
            <person name="Grimmond S.M."/>
            <person name="Teasdale R.D."/>
            <person name="Liu E.T."/>
            <person name="Brusic V."/>
            <person name="Quackenbush J."/>
            <person name="Wahlestedt C."/>
            <person name="Mattick J.S."/>
            <person name="Hume D.A."/>
            <person name="Kai C."/>
            <person name="Sasaki D."/>
            <person name="Tomaru Y."/>
            <person name="Fukuda S."/>
            <person name="Kanamori-Katayama M."/>
            <person name="Suzuki M."/>
            <person name="Aoki J."/>
            <person name="Arakawa T."/>
            <person name="Iida J."/>
            <person name="Imamura K."/>
            <person name="Itoh M."/>
            <person name="Kato T."/>
            <person name="Kawaji H."/>
            <person name="Kawagashira N."/>
            <person name="Kawashima T."/>
            <person name="Kojima M."/>
            <person name="Kondo S."/>
            <person name="Konno H."/>
            <person name="Nakano K."/>
            <person name="Ninomiya N."/>
            <person name="Nishio T."/>
            <person name="Okada M."/>
            <person name="Plessy C."/>
            <person name="Shibata K."/>
            <person name="Shiraki T."/>
            <person name="Suzuki S."/>
            <person name="Tagami M."/>
            <person name="Waki K."/>
            <person name="Watahiki A."/>
            <person name="Okamura-Oho Y."/>
            <person name="Suzuki H."/>
            <person name="Kawai J."/>
            <person name="Hayashizaki Y."/>
        </authorList>
    </citation>
    <scope>NUCLEOTIDE SEQUENCE [LARGE SCALE MRNA]</scope>
    <source>
        <strain>C57BL/6J</strain>
    </source>
</reference>
<reference key="3">
    <citation type="journal article" date="2004" name="Genome Res.">
        <title>The status, quality, and expansion of the NIH full-length cDNA project: the Mammalian Gene Collection (MGC).</title>
        <authorList>
            <consortium name="The MGC Project Team"/>
        </authorList>
    </citation>
    <scope>NUCLEOTIDE SEQUENCE [LARGE SCALE MRNA]</scope>
    <source>
        <strain>Czech II</strain>
        <tissue>Mammary tumor</tissue>
    </source>
</reference>
<reference key="4">
    <citation type="journal article" date="2004" name="DNA Res.">
        <title>Prediction of the coding sequences of mouse homologues of KIAA gene: IV. The complete nucleotide sequences of 500 mouse KIAA-homologous cDNAs identified by screening of terminal sequences of cDNA clones randomly sampled from size-fractionated libraries.</title>
        <authorList>
            <person name="Okazaki N."/>
            <person name="Kikuno R."/>
            <person name="Ohara R."/>
            <person name="Inamoto S."/>
            <person name="Koseki H."/>
            <person name="Hiraoka S."/>
            <person name="Saga Y."/>
            <person name="Seino S."/>
            <person name="Nishimura M."/>
            <person name="Kaisho T."/>
            <person name="Hoshino K."/>
            <person name="Kitamura H."/>
            <person name="Nagase T."/>
            <person name="Ohara O."/>
            <person name="Koga H."/>
        </authorList>
    </citation>
    <scope>NUCLEOTIDE SEQUENCE [LARGE SCALE MRNA] OF 37-683</scope>
    <source>
        <tissue>Spleen</tissue>
    </source>
</reference>
<reference key="5">
    <citation type="journal article" date="2004" name="Oncogene">
        <title>The M-CSF receptor substrate and interacting protein FMIP is governed in its subcellular localization by protein kinase C-mediated phosphorylation, and thereby potentiates M-CSF-mediated differentiation.</title>
        <authorList>
            <person name="Mancini A."/>
            <person name="Koch A."/>
            <person name="Whetton A.D."/>
            <person name="Tamura T."/>
        </authorList>
    </citation>
    <scope>SUBCELLULAR LOCATION</scope>
    <scope>MUTAGENESIS OF 5-SER-SER-6 AND 8-LYS-ARG-9</scope>
    <scope>PHOSPHORYLATION AT SER-5 AND SER-6</scope>
</reference>
<reference key="6">
    <citation type="journal article" date="2005" name="Cell. Signal.">
        <title>Novel insulin-elicited phosphoproteins in adipocytes.</title>
        <authorList>
            <person name="Gridley S."/>
            <person name="Lane W.S."/>
            <person name="Garner C.W."/>
            <person name="Lienhard G.E."/>
        </authorList>
    </citation>
    <scope>PHOSPHORYLATION AT THR-328</scope>
    <scope>TISSUE SPECIFICITY</scope>
    <scope>IDENTIFICATION BY MASS SPECTROMETRY</scope>
</reference>
<reference key="7">
    <citation type="journal article" date="2007" name="Oncogene">
        <title>FMIP controls the adipocyte lineage commitment of C2C12 cells by downmodulation of C/EBP alpha.</title>
        <authorList>
            <person name="Mancini A."/>
            <person name="El Bounkari O."/>
            <person name="Norrenbrock A.-F."/>
            <person name="Scherr M."/>
            <person name="Schaefer D."/>
            <person name="Eder M."/>
            <person name="Banham A.H."/>
            <person name="Pulford K."/>
            <person name="Lyne L."/>
            <person name="Whetton A.D."/>
            <person name="Tamura T."/>
        </authorList>
    </citation>
    <scope>FUNCTION</scope>
    <scope>INTERACTION WITH THOC1</scope>
</reference>
<reference key="8">
    <citation type="journal article" date="2007" name="Proc. Natl. Acad. Sci. U.S.A.">
        <title>Large-scale phosphorylation analysis of mouse liver.</title>
        <authorList>
            <person name="Villen J."/>
            <person name="Beausoleil S.A."/>
            <person name="Gerber S.A."/>
            <person name="Gygi S.P."/>
        </authorList>
    </citation>
    <scope>PHOSPHORYLATION [LARGE SCALE ANALYSIS] AT SER-307; SER-312 AND SER-314</scope>
    <scope>IDENTIFICATION BY MASS SPECTROMETRY [LARGE SCALE ANALYSIS]</scope>
    <source>
        <tissue>Liver</tissue>
    </source>
</reference>
<reference key="9">
    <citation type="journal article" date="2009" name="Cell. Signal.">
        <title>THOC5 couples M-CSF receptor signaling to transcription factor expression.</title>
        <authorList>
            <person name="Carney L."/>
            <person name="Pierce A."/>
            <person name="Rijnen M."/>
            <person name="Gonzalez Sanchez M.B."/>
            <person name="Hamzah H.G."/>
            <person name="Zhang L."/>
            <person name="Tamura T."/>
            <person name="Whetton A.D."/>
        </authorList>
    </citation>
    <scope>FUNCTION</scope>
    <scope>INDUCTION</scope>
    <scope>COMPLEX FORMATION WITH CEBPB</scope>
    <scope>PHOSPHORYLATION AT TYR-225</scope>
</reference>
<reference key="10">
    <citation type="journal article" date="2010" name="BMC Biol.">
        <title>THOC5/FMIP, an mRNA export TREX complex protein, is essential for hematopoietic primitive cell survival in vivo.</title>
        <authorList>
            <person name="Mancini A."/>
            <person name="Niemann-Seyde S.C."/>
            <person name="Pankow R."/>
            <person name="El Bounkari O."/>
            <person name="Klebba-Faerber S."/>
            <person name="Koch A."/>
            <person name="Jaworska E."/>
            <person name="Spooncer E."/>
            <person name="Gruber A.D."/>
            <person name="Whetton A.D."/>
            <person name="Tamura T."/>
        </authorList>
    </citation>
    <scope>FUNCTION</scope>
    <scope>DISRUPTION PHENOTYPE</scope>
</reference>
<reference key="11">
    <citation type="journal article" date="2010" name="Cell">
        <title>A tissue-specific atlas of mouse protein phosphorylation and expression.</title>
        <authorList>
            <person name="Huttlin E.L."/>
            <person name="Jedrychowski M.P."/>
            <person name="Elias J.E."/>
            <person name="Goswami T."/>
            <person name="Rad R."/>
            <person name="Beausoleil S.A."/>
            <person name="Villen J."/>
            <person name="Haas W."/>
            <person name="Sowa M.E."/>
            <person name="Gygi S.P."/>
        </authorList>
    </citation>
    <scope>PHOSPHORYLATION [LARGE SCALE ANALYSIS] AT SER-307; SER-312; SER-314 AND THR-328</scope>
    <scope>IDENTIFICATION BY MASS SPECTROMETRY [LARGE SCALE ANALYSIS]</scope>
    <source>
        <tissue>Brain</tissue>
        <tissue>Brown adipose tissue</tissue>
        <tissue>Kidney</tissue>
        <tissue>Liver</tissue>
        <tissue>Lung</tissue>
        <tissue>Spleen</tissue>
        <tissue>Testis</tissue>
    </source>
</reference>
<sequence length="683" mass="78686">MSSESSKKRKPKVIRSDGTPTEGKRNRSDTEQEGKYYSEEAEVDLRDPGRDYELYKYTCQELQRLMAEIQDLKSKGSKDVAIEIEERRIQSCVHFMTLKKLNRLAHIRLKKGRDQTHEAKQKVDAYHLQLQNLLYEVMHLQKEITKCLEFKSKHEEIDLVSLEEFYSEAPPSISKAEITMGDPHQQTLARLDWELEQRKRLAEKYRECLSNKEKILKEIEVKRDYLSSLQPRLNSIMQASLPVQEYLFMPFDQAHKQYETARHLPPPLYVLFVQATAYGQACDKTLSVAIEGSVDEAKALFKPPEDSQDDESDSDAEEEQTTKRRRPTLGVQLDDKRKEMLKRHPLSVLLDLKCKDNSVLHLTFYYLMNLNIMTVKAKVTTAVELITPISAGDLLSPDSVLSCLYPGDHGKKTPNPANQYQFDKVGILTLRDYVLELGHPYLWVQKLGGLHFPKEQPQQTVMPDHSQSASHMETTMKLLKTRVQSRLALHKQFASLEHGIVPVTSDCQDLFPAKVVSRLVKWVIITHEDYMELHFTKDIVEAGLAGDTNLYYLALIERGTAKLQAAVVLNPGYSSIPPVFRLCLNWKGEKTNSNDDNIRAMESEVNVCYKELCGPRPSHQLLTNQLQRLCVLLDVYLETESHDDSFEGPKEFPQEKMCLRLFRGPSRMKPFKYNHPQGFFSHR</sequence>
<accession>Q8BKT7</accession>
<accession>Q69ZU0</accession>
<accession>Q8CHR3</accession>
<gene>
    <name type="primary">Thoc5</name>
    <name type="synonym">Fmip</name>
    <name type="synonym">Kiaa0983</name>
</gene>
<name>THOC5_MOUSE</name>
<keyword id="KW-0007">Acetylation</keyword>
<keyword id="KW-0175">Coiled coil</keyword>
<keyword id="KW-0963">Cytoplasm</keyword>
<keyword id="KW-0221">Differentiation</keyword>
<keyword id="KW-1017">Isopeptide bond</keyword>
<keyword id="KW-0507">mRNA processing</keyword>
<keyword id="KW-0508">mRNA splicing</keyword>
<keyword id="KW-0509">mRNA transport</keyword>
<keyword id="KW-0539">Nucleus</keyword>
<keyword id="KW-0597">Phosphoprotein</keyword>
<keyword id="KW-1185">Reference proteome</keyword>
<keyword id="KW-0694">RNA-binding</keyword>
<keyword id="KW-0813">Transport</keyword>
<keyword id="KW-0832">Ubl conjugation</keyword>
<organism>
    <name type="scientific">Mus musculus</name>
    <name type="common">Mouse</name>
    <dbReference type="NCBI Taxonomy" id="10090"/>
    <lineage>
        <taxon>Eukaryota</taxon>
        <taxon>Metazoa</taxon>
        <taxon>Chordata</taxon>
        <taxon>Craniata</taxon>
        <taxon>Vertebrata</taxon>
        <taxon>Euteleostomi</taxon>
        <taxon>Mammalia</taxon>
        <taxon>Eutheria</taxon>
        <taxon>Euarchontoglires</taxon>
        <taxon>Glires</taxon>
        <taxon>Rodentia</taxon>
        <taxon>Myomorpha</taxon>
        <taxon>Muroidea</taxon>
        <taxon>Muridae</taxon>
        <taxon>Murinae</taxon>
        <taxon>Mus</taxon>
        <taxon>Mus</taxon>
    </lineage>
</organism>
<comment type="function">
    <text evidence="1">Component of the THO subcomplex of the TREX complex which is thought to couple mRNA transcription, processing and nuclear export, and which specifically associates with spliced mRNA and not with unspliced pre-mRNA. Plays a key structural role in the oligomerization of the THO-DDX39B complex. TREX is recruited to spliced mRNAs by a transcription-independent mechanism, binds to mRNA upstream of the exon-junction complex (EJC) and is recruited in a splicing- and cap-dependent manner to a region near the 5' end of the mRNA where it functions in mRNA export to the cytoplasm via the TAP/NXF1 pathway. THOC5 in conjunction with ALYREF/THOC4 functions in NXF1-NXT1 mediated nuclear export of HSP70 mRNA; both proteins enhance the RNA binding activity of NXF1 and are required for NXF1 localization to the nuclear rim. Involved in transcription elongation and genome stability. Involved in alternative polyadenylation site choice by recruiting CPSF6 to 5' region of target genes; probably mediates association of the TREX and CFIm complexes.</text>
</comment>
<comment type="function">
    <text>Regulates the expression of myeloid transcription factors CEBPA, CEBPB and GAB2 by enhancing the levels of phosphatidylinositol 3,4,5-trisphosphate. May be involved in the differentiation of granulocytes and adipocytes. Essential for hematopoietic primitive cell survival and plays an integral role in monocytic development.</text>
</comment>
<comment type="subunit">
    <text evidence="1 3 6">Component of the THO subcomplex, which is composed of THOC1, THOC2, THOC3, THOC5, THOC6 and THOC7 (By similarity). The THO subcomplex interacts with DDX39B to form the THO-DDX39B complex which multimerizes into a 28-subunit tetrameric assembly (By similarity). Component of the transcription/export (TREX) complex at least composed of ALYREF/THOC4, DDX39B, SARNP/CIP29, CHTOP and the THO subcomplex; in the complex interacts with THOC1, THOC2, THOC5, THOC6 and THOC7; forms a coiled-coil dimer with THOC7; together with THOC6 and THOC7, plays a key structural role in the oligomerization of the THO-DDX39B complex. TREX seems to have a dynamic structure involving ATP-dependent remodeling (By similarity). Interacts (via N-terminus) with the NTF2 domain of NXF1 (By similarity). Interacts with phosphorylated CSF1R (PubMed:10597251). Forms a complex with CEBPB (PubMed:19015024). Interacts with CPSF6; indicative for an association with the cleavage factor Im (CFIm) complex (By similarity). Interacts with THOC1 (PubMed:16909111). Interacts with LUZP4 (By similarity). Interacts with NCBP3 (By similarity).</text>
</comment>
<comment type="subcellular location">
    <subcellularLocation>
        <location evidence="4">Nucleus</location>
    </subcellularLocation>
    <subcellularLocation>
        <location evidence="4">Cytoplasm</location>
    </subcellularLocation>
    <text evidence="1">Shuttles between nucleus and cytoplasm.</text>
</comment>
<comment type="tissue specificity">
    <text evidence="3 5">Ubiquitously expressed, with highest levels in testis, liver and heart.</text>
</comment>
<comment type="induction">
    <text evidence="7">Up-regulated following CSF1 stimulation.</text>
</comment>
<comment type="PTM">
    <text evidence="3 4 5 7">Phosphorylated on tyrosine upon binding to activated CSF1R; which causes a dissociation of the two proteins. Phosphorylation on Ser-5 and/or Ser-6 is required for nuclear export. Phosphorylated on Thr-328 in insulin-stimulated adipocytes.</text>
</comment>
<comment type="disruption phenotype">
    <text evidence="8">Embryonic lethality seen before day 5.5 of embryonic development (E5.5).</text>
</comment>
<comment type="similarity">
    <text evidence="10">Belongs to the THOC5 family.</text>
</comment>
<evidence type="ECO:0000250" key="1">
    <source>
        <dbReference type="UniProtKB" id="Q13769"/>
    </source>
</evidence>
<evidence type="ECO:0000256" key="2">
    <source>
        <dbReference type="SAM" id="MobiDB-lite"/>
    </source>
</evidence>
<evidence type="ECO:0000269" key="3">
    <source>
    </source>
</evidence>
<evidence type="ECO:0000269" key="4">
    <source>
    </source>
</evidence>
<evidence type="ECO:0000269" key="5">
    <source>
    </source>
</evidence>
<evidence type="ECO:0000269" key="6">
    <source>
    </source>
</evidence>
<evidence type="ECO:0000269" key="7">
    <source>
    </source>
</evidence>
<evidence type="ECO:0000269" key="8">
    <source>
    </source>
</evidence>
<evidence type="ECO:0000303" key="9">
    <source>
    </source>
</evidence>
<evidence type="ECO:0000305" key="10"/>
<evidence type="ECO:0000305" key="11">
    <source>
    </source>
</evidence>
<evidence type="ECO:0007744" key="12">
    <source>
    </source>
</evidence>
<evidence type="ECO:0007744" key="13">
    <source>
    </source>
</evidence>